<reference key="1">
    <citation type="journal article" date="2007" name="J. Bacteriol.">
        <title>Genome sequence of Avery's virulent serotype 2 strain D39 of Streptococcus pneumoniae and comparison with that of unencapsulated laboratory strain R6.</title>
        <authorList>
            <person name="Lanie J.A."/>
            <person name="Ng W.-L."/>
            <person name="Kazmierczak K.M."/>
            <person name="Andrzejewski T.M."/>
            <person name="Davidsen T.M."/>
            <person name="Wayne K.J."/>
            <person name="Tettelin H."/>
            <person name="Glass J.I."/>
            <person name="Winkler M.E."/>
        </authorList>
    </citation>
    <scope>NUCLEOTIDE SEQUENCE [LARGE SCALE GENOMIC DNA]</scope>
    <source>
        <strain>D39 / NCTC 7466</strain>
    </source>
</reference>
<organism>
    <name type="scientific">Streptococcus pneumoniae serotype 2 (strain D39 / NCTC 7466)</name>
    <dbReference type="NCBI Taxonomy" id="373153"/>
    <lineage>
        <taxon>Bacteria</taxon>
        <taxon>Bacillati</taxon>
        <taxon>Bacillota</taxon>
        <taxon>Bacilli</taxon>
        <taxon>Lactobacillales</taxon>
        <taxon>Streptococcaceae</taxon>
        <taxon>Streptococcus</taxon>
    </lineage>
</organism>
<accession>Q04IZ0</accession>
<proteinExistence type="inferred from homology"/>
<keyword id="KW-0028">Amino-acid biosynthesis</keyword>
<keyword id="KW-0057">Aromatic amino acid biosynthesis</keyword>
<keyword id="KW-0456">Lyase</keyword>
<keyword id="KW-1185">Reference proteome</keyword>
<keyword id="KW-0822">Tryptophan biosynthesis</keyword>
<comment type="function">
    <text evidence="1">The alpha subunit is responsible for the aldol cleavage of indoleglycerol phosphate to indole and glyceraldehyde 3-phosphate.</text>
</comment>
<comment type="catalytic activity">
    <reaction evidence="1">
        <text>(1S,2R)-1-C-(indol-3-yl)glycerol 3-phosphate + L-serine = D-glyceraldehyde 3-phosphate + L-tryptophan + H2O</text>
        <dbReference type="Rhea" id="RHEA:10532"/>
        <dbReference type="ChEBI" id="CHEBI:15377"/>
        <dbReference type="ChEBI" id="CHEBI:33384"/>
        <dbReference type="ChEBI" id="CHEBI:57912"/>
        <dbReference type="ChEBI" id="CHEBI:58866"/>
        <dbReference type="ChEBI" id="CHEBI:59776"/>
        <dbReference type="EC" id="4.2.1.20"/>
    </reaction>
</comment>
<comment type="pathway">
    <text evidence="1">Amino-acid biosynthesis; L-tryptophan biosynthesis; L-tryptophan from chorismate: step 5/5.</text>
</comment>
<comment type="subunit">
    <text evidence="1">Tetramer of two alpha and two beta chains.</text>
</comment>
<comment type="similarity">
    <text evidence="1">Belongs to the TrpA family.</text>
</comment>
<name>TRPA_STRP2</name>
<dbReference type="EC" id="4.2.1.20" evidence="1"/>
<dbReference type="EMBL" id="CP000410">
    <property type="protein sequence ID" value="ABJ53624.1"/>
    <property type="molecule type" value="Genomic_DNA"/>
</dbReference>
<dbReference type="RefSeq" id="WP_001127036.1">
    <property type="nucleotide sequence ID" value="NZ_JAMLJR010000003.1"/>
</dbReference>
<dbReference type="SMR" id="Q04IZ0"/>
<dbReference type="PaxDb" id="373153-SPD_1596"/>
<dbReference type="KEGG" id="spd:SPD_1596"/>
<dbReference type="eggNOG" id="COG0159">
    <property type="taxonomic scope" value="Bacteria"/>
</dbReference>
<dbReference type="HOGENOM" id="CLU_016734_0_0_9"/>
<dbReference type="BioCyc" id="SPNE373153:G1G6V-1726-MONOMER"/>
<dbReference type="UniPathway" id="UPA00035">
    <property type="reaction ID" value="UER00044"/>
</dbReference>
<dbReference type="Proteomes" id="UP000001452">
    <property type="component" value="Chromosome"/>
</dbReference>
<dbReference type="GO" id="GO:0005829">
    <property type="term" value="C:cytosol"/>
    <property type="evidence" value="ECO:0007669"/>
    <property type="project" value="TreeGrafter"/>
</dbReference>
<dbReference type="GO" id="GO:0004834">
    <property type="term" value="F:tryptophan synthase activity"/>
    <property type="evidence" value="ECO:0007669"/>
    <property type="project" value="UniProtKB-UniRule"/>
</dbReference>
<dbReference type="CDD" id="cd04724">
    <property type="entry name" value="Tryptophan_synthase_alpha"/>
    <property type="match status" value="1"/>
</dbReference>
<dbReference type="Gene3D" id="3.20.20.70">
    <property type="entry name" value="Aldolase class I"/>
    <property type="match status" value="1"/>
</dbReference>
<dbReference type="HAMAP" id="MF_00131">
    <property type="entry name" value="Trp_synth_alpha"/>
    <property type="match status" value="1"/>
</dbReference>
<dbReference type="InterPro" id="IPR013785">
    <property type="entry name" value="Aldolase_TIM"/>
</dbReference>
<dbReference type="InterPro" id="IPR011060">
    <property type="entry name" value="RibuloseP-bd_barrel"/>
</dbReference>
<dbReference type="InterPro" id="IPR018204">
    <property type="entry name" value="Trp_synthase_alpha_AS"/>
</dbReference>
<dbReference type="InterPro" id="IPR002028">
    <property type="entry name" value="Trp_synthase_suA"/>
</dbReference>
<dbReference type="NCBIfam" id="TIGR00262">
    <property type="entry name" value="trpA"/>
    <property type="match status" value="1"/>
</dbReference>
<dbReference type="PANTHER" id="PTHR43406:SF1">
    <property type="entry name" value="TRYPTOPHAN SYNTHASE ALPHA CHAIN, CHLOROPLASTIC"/>
    <property type="match status" value="1"/>
</dbReference>
<dbReference type="PANTHER" id="PTHR43406">
    <property type="entry name" value="TRYPTOPHAN SYNTHASE, ALPHA CHAIN"/>
    <property type="match status" value="1"/>
</dbReference>
<dbReference type="Pfam" id="PF00290">
    <property type="entry name" value="Trp_syntA"/>
    <property type="match status" value="1"/>
</dbReference>
<dbReference type="SUPFAM" id="SSF51366">
    <property type="entry name" value="Ribulose-phoshate binding barrel"/>
    <property type="match status" value="1"/>
</dbReference>
<dbReference type="PROSITE" id="PS00167">
    <property type="entry name" value="TRP_SYNTHASE_ALPHA"/>
    <property type="match status" value="1"/>
</dbReference>
<sequence>MPKTLTEKLNAIKATGKGIFVPYIMAGDHEKGLDGLGETIHFLEDLGVSAIEVGIPFSDPVADGPVIEEAGLRSLAHGTSTQALVETLKTIETEIPLVIMTYFNPLFQYGVENFVKDLADTAVKGLIIPDLPHEHANFVEPFLADTDIALIPLVSLTTGIERQKELIEGAEGFVYAVAINGVTGKSGNYRADLDKHLAQLHQVADIPVLTGFGVSSQADLERFNAVSDGVIVGSKIVKALHQGEPIQDFIRQAVAYQK</sequence>
<gene>
    <name evidence="1" type="primary">trpA</name>
    <name type="ordered locus">SPD_1596</name>
</gene>
<protein>
    <recommendedName>
        <fullName evidence="1">Tryptophan synthase alpha chain</fullName>
        <ecNumber evidence="1">4.2.1.20</ecNumber>
    </recommendedName>
</protein>
<feature type="chain" id="PRO_1000018294" description="Tryptophan synthase alpha chain">
    <location>
        <begin position="1"/>
        <end position="258"/>
    </location>
</feature>
<feature type="active site" description="Proton acceptor" evidence="1">
    <location>
        <position position="52"/>
    </location>
</feature>
<feature type="active site" description="Proton acceptor" evidence="1">
    <location>
        <position position="63"/>
    </location>
</feature>
<evidence type="ECO:0000255" key="1">
    <source>
        <dbReference type="HAMAP-Rule" id="MF_00131"/>
    </source>
</evidence>